<sequence length="369" mass="40252">MAFDRIEDIIEDYRQGKMVLLVDDEDRENEGDLLLAADCCTAQAISFMAREARGLICLTLTDEHCKSLGLEQMVPSNGSVFATAFTVSIEATTGVTTGISAADRARTVQAAVNPGAVPDDLVQPGHIFPLRARDGGVLTRAGHTEAGCDLARMAGFTPASVIVEVMNDDGTMARRPDLELFAEKHGIRIGTIADLIHYRLSTEHTIVRIGERELPTVHGTFRLFSYEDRIEGGVHMAMVMGDIRREDPTLVRVHVVDPLRDLVGAEYTGPANWTLWAALQRVAEEGCGVVVVLANHESSQALLERIPQLTQPPRQYTRSQSRIYSEVGTGAQILQDLGIGKLRHLGPPLKYAGLTGYDLEVIESIPFPG</sequence>
<organism>
    <name type="scientific">Pseudomonas syringae pv. tomato (strain ATCC BAA-871 / DC3000)</name>
    <dbReference type="NCBI Taxonomy" id="223283"/>
    <lineage>
        <taxon>Bacteria</taxon>
        <taxon>Pseudomonadati</taxon>
        <taxon>Pseudomonadota</taxon>
        <taxon>Gammaproteobacteria</taxon>
        <taxon>Pseudomonadales</taxon>
        <taxon>Pseudomonadaceae</taxon>
        <taxon>Pseudomonas</taxon>
    </lineage>
</organism>
<keyword id="KW-0456">Lyase</keyword>
<keyword id="KW-0460">Magnesium</keyword>
<keyword id="KW-0464">Manganese</keyword>
<keyword id="KW-0479">Metal-binding</keyword>
<keyword id="KW-1185">Reference proteome</keyword>
<keyword id="KW-0686">Riboflavin biosynthesis</keyword>
<proteinExistence type="inferred from homology"/>
<gene>
    <name type="primary">ribB</name>
    <name type="ordered locus">PSPTO_2668</name>
</gene>
<reference key="1">
    <citation type="journal article" date="2003" name="Proc. Natl. Acad. Sci. U.S.A.">
        <title>The complete genome sequence of the Arabidopsis and tomato pathogen Pseudomonas syringae pv. tomato DC3000.</title>
        <authorList>
            <person name="Buell C.R."/>
            <person name="Joardar V."/>
            <person name="Lindeberg M."/>
            <person name="Selengut J."/>
            <person name="Paulsen I.T."/>
            <person name="Gwinn M.L."/>
            <person name="Dodson R.J."/>
            <person name="DeBoy R.T."/>
            <person name="Durkin A.S."/>
            <person name="Kolonay J.F."/>
            <person name="Madupu R."/>
            <person name="Daugherty S.C."/>
            <person name="Brinkac L.M."/>
            <person name="Beanan M.J."/>
            <person name="Haft D.H."/>
            <person name="Nelson W.C."/>
            <person name="Davidsen T.M."/>
            <person name="Zafar N."/>
            <person name="Zhou L."/>
            <person name="Liu J."/>
            <person name="Yuan Q."/>
            <person name="Khouri H.M."/>
            <person name="Fedorova N.B."/>
            <person name="Tran B."/>
            <person name="Russell D."/>
            <person name="Berry K.J."/>
            <person name="Utterback T.R."/>
            <person name="Van Aken S.E."/>
            <person name="Feldblyum T.V."/>
            <person name="D'Ascenzo M."/>
            <person name="Deng W.-L."/>
            <person name="Ramos A.R."/>
            <person name="Alfano J.R."/>
            <person name="Cartinhour S."/>
            <person name="Chatterjee A.K."/>
            <person name="Delaney T.P."/>
            <person name="Lazarowitz S.G."/>
            <person name="Martin G.B."/>
            <person name="Schneider D.J."/>
            <person name="Tang X."/>
            <person name="Bender C.L."/>
            <person name="White O."/>
            <person name="Fraser C.M."/>
            <person name="Collmer A."/>
        </authorList>
    </citation>
    <scope>NUCLEOTIDE SEQUENCE [LARGE SCALE GENOMIC DNA]</scope>
    <source>
        <strain>ATCC BAA-871 / DC3000</strain>
    </source>
</reference>
<accession>Q882G0</accession>
<dbReference type="EC" id="4.1.99.12"/>
<dbReference type="EMBL" id="AE016853">
    <property type="protein sequence ID" value="AAO56170.1"/>
    <property type="molecule type" value="Genomic_DNA"/>
</dbReference>
<dbReference type="RefSeq" id="NP_792475.1">
    <property type="nucleotide sequence ID" value="NC_004578.1"/>
</dbReference>
<dbReference type="RefSeq" id="WP_011104135.1">
    <property type="nucleotide sequence ID" value="NC_004578.1"/>
</dbReference>
<dbReference type="SMR" id="Q882G0"/>
<dbReference type="STRING" id="223283.PSPTO_2668"/>
<dbReference type="GeneID" id="1184320"/>
<dbReference type="KEGG" id="pst:PSPTO_2668"/>
<dbReference type="PATRIC" id="fig|223283.9.peg.2719"/>
<dbReference type="eggNOG" id="COG0108">
    <property type="taxonomic scope" value="Bacteria"/>
</dbReference>
<dbReference type="HOGENOM" id="CLU_020273_1_2_6"/>
<dbReference type="OrthoDB" id="9793111at2"/>
<dbReference type="PhylomeDB" id="Q882G0"/>
<dbReference type="UniPathway" id="UPA00275">
    <property type="reaction ID" value="UER00399"/>
</dbReference>
<dbReference type="Proteomes" id="UP000002515">
    <property type="component" value="Chromosome"/>
</dbReference>
<dbReference type="GO" id="GO:0005829">
    <property type="term" value="C:cytosol"/>
    <property type="evidence" value="ECO:0007669"/>
    <property type="project" value="TreeGrafter"/>
</dbReference>
<dbReference type="GO" id="GO:0008686">
    <property type="term" value="F:3,4-dihydroxy-2-butanone-4-phosphate synthase activity"/>
    <property type="evidence" value="ECO:0007669"/>
    <property type="project" value="UniProtKB-UniRule"/>
</dbReference>
<dbReference type="GO" id="GO:0003935">
    <property type="term" value="F:GTP cyclohydrolase II activity"/>
    <property type="evidence" value="ECO:0007669"/>
    <property type="project" value="TreeGrafter"/>
</dbReference>
<dbReference type="GO" id="GO:0000287">
    <property type="term" value="F:magnesium ion binding"/>
    <property type="evidence" value="ECO:0007669"/>
    <property type="project" value="UniProtKB-UniRule"/>
</dbReference>
<dbReference type="GO" id="GO:0030145">
    <property type="term" value="F:manganese ion binding"/>
    <property type="evidence" value="ECO:0007669"/>
    <property type="project" value="UniProtKB-UniRule"/>
</dbReference>
<dbReference type="GO" id="GO:0009231">
    <property type="term" value="P:riboflavin biosynthetic process"/>
    <property type="evidence" value="ECO:0007669"/>
    <property type="project" value="UniProtKB-UniRule"/>
</dbReference>
<dbReference type="FunFam" id="3.90.870.10:FF:000001">
    <property type="entry name" value="Riboflavin biosynthesis protein RibBA"/>
    <property type="match status" value="1"/>
</dbReference>
<dbReference type="Gene3D" id="3.90.870.10">
    <property type="entry name" value="DHBP synthase"/>
    <property type="match status" value="1"/>
</dbReference>
<dbReference type="Gene3D" id="3.40.50.10990">
    <property type="entry name" value="GTP cyclohydrolase II"/>
    <property type="match status" value="2"/>
</dbReference>
<dbReference type="HAMAP" id="MF_00180">
    <property type="entry name" value="RibB"/>
    <property type="match status" value="1"/>
</dbReference>
<dbReference type="InterPro" id="IPR017945">
    <property type="entry name" value="DHBP_synth_RibB-like_a/b_dom"/>
</dbReference>
<dbReference type="InterPro" id="IPR000422">
    <property type="entry name" value="DHBP_synthase_RibB"/>
</dbReference>
<dbReference type="InterPro" id="IPR032677">
    <property type="entry name" value="GTP_cyclohydro_II"/>
</dbReference>
<dbReference type="InterPro" id="IPR036144">
    <property type="entry name" value="RibA-like_sf"/>
</dbReference>
<dbReference type="NCBIfam" id="NF009132">
    <property type="entry name" value="PRK12485.1"/>
    <property type="match status" value="1"/>
</dbReference>
<dbReference type="NCBIfam" id="NF010626">
    <property type="entry name" value="PRK14019.1"/>
    <property type="match status" value="1"/>
</dbReference>
<dbReference type="NCBIfam" id="TIGR00506">
    <property type="entry name" value="ribB"/>
    <property type="match status" value="1"/>
</dbReference>
<dbReference type="PANTHER" id="PTHR21327:SF34">
    <property type="entry name" value="3,4-DIHYDROXY-2-BUTANONE 4-PHOSPHATE SYNTHASE"/>
    <property type="match status" value="1"/>
</dbReference>
<dbReference type="PANTHER" id="PTHR21327">
    <property type="entry name" value="GTP CYCLOHYDROLASE II-RELATED"/>
    <property type="match status" value="1"/>
</dbReference>
<dbReference type="Pfam" id="PF00926">
    <property type="entry name" value="DHBP_synthase"/>
    <property type="match status" value="1"/>
</dbReference>
<dbReference type="Pfam" id="PF00925">
    <property type="entry name" value="GTP_cyclohydro2"/>
    <property type="match status" value="1"/>
</dbReference>
<dbReference type="PIRSF" id="PIRSF001259">
    <property type="entry name" value="RibA"/>
    <property type="match status" value="1"/>
</dbReference>
<dbReference type="SUPFAM" id="SSF142695">
    <property type="entry name" value="RibA-like"/>
    <property type="match status" value="1"/>
</dbReference>
<dbReference type="SUPFAM" id="SSF55821">
    <property type="entry name" value="YrdC/RibB"/>
    <property type="match status" value="1"/>
</dbReference>
<evidence type="ECO:0000250" key="1"/>
<evidence type="ECO:0000305" key="2"/>
<comment type="function">
    <text evidence="1">Catalyzes the conversion of D-ribulose 5-phosphate to formate and 3,4-dihydroxy-2-butanone 4-phosphate.</text>
</comment>
<comment type="catalytic activity">
    <reaction>
        <text>D-ribulose 5-phosphate = (2S)-2-hydroxy-3-oxobutyl phosphate + formate + H(+)</text>
        <dbReference type="Rhea" id="RHEA:18457"/>
        <dbReference type="ChEBI" id="CHEBI:15378"/>
        <dbReference type="ChEBI" id="CHEBI:15740"/>
        <dbReference type="ChEBI" id="CHEBI:58121"/>
        <dbReference type="ChEBI" id="CHEBI:58830"/>
        <dbReference type="EC" id="4.1.99.12"/>
    </reaction>
</comment>
<comment type="cofactor">
    <cofactor evidence="1">
        <name>Mg(2+)</name>
        <dbReference type="ChEBI" id="CHEBI:18420"/>
    </cofactor>
    <cofactor evidence="1">
        <name>Mn(2+)</name>
        <dbReference type="ChEBI" id="CHEBI:29035"/>
    </cofactor>
    <text evidence="1">Binds 2 divalent metal cations per subunit. Magnesium or manganese.</text>
</comment>
<comment type="pathway">
    <text>Cofactor biosynthesis; riboflavin biosynthesis; 2-hydroxy-3-oxobutyl phosphate from D-ribulose 5-phosphate: step 1/1.</text>
</comment>
<comment type="similarity">
    <text evidence="2">In the N-terminal section; belongs to the DHBP synthase family.</text>
</comment>
<comment type="similarity">
    <text evidence="2">In the C-terminal section; belongs to the GTP cyclohydrolase II family.</text>
</comment>
<name>RIBB_PSESM</name>
<feature type="chain" id="PRO_0000151732" description="3,4-dihydroxy-2-butanone 4-phosphate synthase">
    <location>
        <begin position="1"/>
        <end position="369"/>
    </location>
</feature>
<feature type="region of interest" description="DHBP synthase">
    <location>
        <begin position="1"/>
        <end position="201"/>
    </location>
</feature>
<feature type="region of interest" description="GTP cyclohydrolase II-like">
    <location>
        <begin position="202"/>
        <end position="369"/>
    </location>
</feature>
<feature type="binding site" evidence="1">
    <location>
        <begin position="27"/>
        <end position="28"/>
    </location>
    <ligand>
        <name>D-ribulose 5-phosphate</name>
        <dbReference type="ChEBI" id="CHEBI:58121"/>
    </ligand>
</feature>
<feature type="binding site" evidence="1">
    <location>
        <position position="28"/>
    </location>
    <ligand>
        <name>Mg(2+)</name>
        <dbReference type="ChEBI" id="CHEBI:18420"/>
        <label>1</label>
    </ligand>
</feature>
<feature type="binding site" evidence="1">
    <location>
        <position position="28"/>
    </location>
    <ligand>
        <name>Mg(2+)</name>
        <dbReference type="ChEBI" id="CHEBI:18420"/>
        <label>2</label>
    </ligand>
</feature>
<feature type="binding site" evidence="1">
    <location>
        <position position="32"/>
    </location>
    <ligand>
        <name>D-ribulose 5-phosphate</name>
        <dbReference type="ChEBI" id="CHEBI:58121"/>
    </ligand>
</feature>
<feature type="binding site" evidence="1">
    <location>
        <begin position="140"/>
        <end position="144"/>
    </location>
    <ligand>
        <name>D-ribulose 5-phosphate</name>
        <dbReference type="ChEBI" id="CHEBI:58121"/>
    </ligand>
</feature>
<feature type="binding site" evidence="1">
    <location>
        <position position="143"/>
    </location>
    <ligand>
        <name>Mg(2+)</name>
        <dbReference type="ChEBI" id="CHEBI:18420"/>
        <label>2</label>
    </ligand>
</feature>
<feature type="binding site" evidence="1">
    <location>
        <position position="164"/>
    </location>
    <ligand>
        <name>D-ribulose 5-phosphate</name>
        <dbReference type="ChEBI" id="CHEBI:58121"/>
    </ligand>
</feature>
<feature type="site" description="Essential for catalytic activity" evidence="1">
    <location>
        <position position="126"/>
    </location>
</feature>
<feature type="site" description="Essential for catalytic activity" evidence="1">
    <location>
        <position position="164"/>
    </location>
</feature>
<protein>
    <recommendedName>
        <fullName>3,4-dihydroxy-2-butanone 4-phosphate synthase</fullName>
        <shortName>DHBP synthase</shortName>
        <ecNumber>4.1.99.12</ecNumber>
    </recommendedName>
</protein>